<proteinExistence type="evidence at protein level"/>
<organism>
    <name type="scientific">Arabidopsis thaliana</name>
    <name type="common">Mouse-ear cress</name>
    <dbReference type="NCBI Taxonomy" id="3702"/>
    <lineage>
        <taxon>Eukaryota</taxon>
        <taxon>Viridiplantae</taxon>
        <taxon>Streptophyta</taxon>
        <taxon>Embryophyta</taxon>
        <taxon>Tracheophyta</taxon>
        <taxon>Spermatophyta</taxon>
        <taxon>Magnoliopsida</taxon>
        <taxon>eudicotyledons</taxon>
        <taxon>Gunneridae</taxon>
        <taxon>Pentapetalae</taxon>
        <taxon>rosids</taxon>
        <taxon>malvids</taxon>
        <taxon>Brassicales</taxon>
        <taxon>Brassicaceae</taxon>
        <taxon>Camelineae</taxon>
        <taxon>Arabidopsis</taxon>
    </lineage>
</organism>
<name>DTX14_ARATH</name>
<sequence length="485" mass="52425">MDSAEKGLLVVSDREEVNKKDGFLRETKKLSYIAGPMIAVNSSMYVLQVISIMMVGHLGELFLSSTAIAVSFCSVTGFSVVFGLASALETLCGQANGAKQYEKLGVHTYTGIVSLFLVCIPLSLLWTYIGDILSLIGQDAMVAQEAGKFATWLIPALFGYATLQPLVRFFQAQSLILPLVMSSVSSLCIHIVLCWSLVFKFGLGSLGAAIAIGVSYWLNVTVLGLYMTFSSSCSKSRATISMSLFEGMGEFFRFGIPSASMICLEWWSFEFLVLLSGILPNPKLEASVLSVCLSTQSSLYQIPESLGAAASTRVANELGAGNPKQARMAVYTAMVITGVESIMVGAIVFGARNVFGYLFSSETEVVDYVKSMAPLLSLSVIFDALHAALSGVARGSGRQDIGAYVNLAAYYLFGIPTAILLAFGFKMRGRGLWIGITVGSCVQAVLLGLIVILTNWKKQARKARERVMGDEYEEKESEEEHEYIS</sequence>
<comment type="subcellular location">
    <subcellularLocation>
        <location evidence="1">Membrane</location>
        <topology evidence="1">Multi-pass membrane protein</topology>
    </subcellularLocation>
</comment>
<comment type="similarity">
    <text evidence="3">Belongs to the multi antimicrobial extrusion (MATE) (TC 2.A.66.1) family.</text>
</comment>
<accession>Q9C994</accession>
<protein>
    <recommendedName>
        <fullName evidence="2">Protein DETOXIFICATION 14</fullName>
        <shortName evidence="2">AtDTX14</shortName>
    </recommendedName>
    <alternativeName>
        <fullName evidence="3">Multidrug and toxic compound extrusion protein 14</fullName>
        <shortName evidence="3">MATE protein 14</shortName>
    </alternativeName>
</protein>
<dbReference type="EMBL" id="AC016972">
    <property type="protein sequence ID" value="AAG51691.1"/>
    <property type="molecule type" value="Genomic_DNA"/>
</dbReference>
<dbReference type="EMBL" id="CP002684">
    <property type="protein sequence ID" value="AEE35165.1"/>
    <property type="molecule type" value="Genomic_DNA"/>
</dbReference>
<dbReference type="PIR" id="A96736">
    <property type="entry name" value="A96736"/>
</dbReference>
<dbReference type="RefSeq" id="NP_177270.1">
    <property type="nucleotide sequence ID" value="NM_105783.3"/>
</dbReference>
<dbReference type="PDB" id="5Y50">
    <property type="method" value="X-ray"/>
    <property type="resolution" value="2.60 A"/>
    <property type="chains" value="A=20-473"/>
</dbReference>
<dbReference type="PDBsum" id="5Y50"/>
<dbReference type="SMR" id="Q9C994"/>
<dbReference type="FunCoup" id="Q9C994">
    <property type="interactions" value="241"/>
</dbReference>
<dbReference type="IntAct" id="Q9C994">
    <property type="interactions" value="20"/>
</dbReference>
<dbReference type="STRING" id="3702.Q9C994"/>
<dbReference type="TCDB" id="2.A.66.1.52">
    <property type="family name" value="the multidrug/oligosaccharidyl-lipid/polysaccharide (mop) flippase superfamily"/>
</dbReference>
<dbReference type="iPTMnet" id="Q9C994"/>
<dbReference type="PaxDb" id="3702-AT1G71140.1"/>
<dbReference type="ProteomicsDB" id="220716"/>
<dbReference type="EnsemblPlants" id="AT1G71140.1">
    <property type="protein sequence ID" value="AT1G71140.1"/>
    <property type="gene ID" value="AT1G71140"/>
</dbReference>
<dbReference type="GeneID" id="843454"/>
<dbReference type="Gramene" id="AT1G71140.1">
    <property type="protein sequence ID" value="AT1G71140.1"/>
    <property type="gene ID" value="AT1G71140"/>
</dbReference>
<dbReference type="KEGG" id="ath:AT1G71140"/>
<dbReference type="Araport" id="AT1G71140"/>
<dbReference type="TAIR" id="AT1G71140">
    <property type="gene designation" value="DTX14"/>
</dbReference>
<dbReference type="eggNOG" id="KOG1347">
    <property type="taxonomic scope" value="Eukaryota"/>
</dbReference>
<dbReference type="HOGENOM" id="CLU_012893_1_0_1"/>
<dbReference type="InParanoid" id="Q9C994"/>
<dbReference type="OMA" id="WIYMGEI"/>
<dbReference type="PhylomeDB" id="Q9C994"/>
<dbReference type="PRO" id="PR:Q9C994"/>
<dbReference type="Proteomes" id="UP000006548">
    <property type="component" value="Chromosome 1"/>
</dbReference>
<dbReference type="ExpressionAtlas" id="Q9C994">
    <property type="expression patterns" value="baseline and differential"/>
</dbReference>
<dbReference type="GO" id="GO:0016020">
    <property type="term" value="C:membrane"/>
    <property type="evidence" value="ECO:0007669"/>
    <property type="project" value="UniProtKB-SubCell"/>
</dbReference>
<dbReference type="GO" id="GO:0000325">
    <property type="term" value="C:plant-type vacuole"/>
    <property type="evidence" value="ECO:0007005"/>
    <property type="project" value="TAIR"/>
</dbReference>
<dbReference type="GO" id="GO:0015297">
    <property type="term" value="F:antiporter activity"/>
    <property type="evidence" value="ECO:0007669"/>
    <property type="project" value="InterPro"/>
</dbReference>
<dbReference type="GO" id="GO:0042910">
    <property type="term" value="F:xenobiotic transmembrane transporter activity"/>
    <property type="evidence" value="ECO:0007669"/>
    <property type="project" value="InterPro"/>
</dbReference>
<dbReference type="GO" id="GO:1990961">
    <property type="term" value="P:xenobiotic detoxification by transmembrane export across the plasma membrane"/>
    <property type="evidence" value="ECO:0007669"/>
    <property type="project" value="InterPro"/>
</dbReference>
<dbReference type="GO" id="GO:0042908">
    <property type="term" value="P:xenobiotic transport"/>
    <property type="evidence" value="ECO:0000314"/>
    <property type="project" value="TAIR"/>
</dbReference>
<dbReference type="CDD" id="cd13132">
    <property type="entry name" value="MATE_eukaryotic"/>
    <property type="match status" value="1"/>
</dbReference>
<dbReference type="InterPro" id="IPR045069">
    <property type="entry name" value="MATE_euk"/>
</dbReference>
<dbReference type="InterPro" id="IPR002528">
    <property type="entry name" value="MATE_fam"/>
</dbReference>
<dbReference type="NCBIfam" id="TIGR00797">
    <property type="entry name" value="matE"/>
    <property type="match status" value="1"/>
</dbReference>
<dbReference type="PANTHER" id="PTHR11206">
    <property type="entry name" value="MULTIDRUG RESISTANCE PROTEIN"/>
    <property type="match status" value="1"/>
</dbReference>
<dbReference type="Pfam" id="PF01554">
    <property type="entry name" value="MatE"/>
    <property type="match status" value="2"/>
</dbReference>
<feature type="chain" id="PRO_0000434057" description="Protein DETOXIFICATION 14">
    <location>
        <begin position="1"/>
        <end position="485"/>
    </location>
</feature>
<feature type="transmembrane region" description="Helical" evidence="1">
    <location>
        <begin position="30"/>
        <end position="50"/>
    </location>
</feature>
<feature type="transmembrane region" description="Helical" evidence="1">
    <location>
        <begin position="68"/>
        <end position="88"/>
    </location>
</feature>
<feature type="transmembrane region" description="Helical" evidence="1">
    <location>
        <begin position="112"/>
        <end position="132"/>
    </location>
</feature>
<feature type="transmembrane region" description="Helical" evidence="1">
    <location>
        <begin position="147"/>
        <end position="167"/>
    </location>
</feature>
<feature type="transmembrane region" description="Helical" evidence="1">
    <location>
        <begin position="175"/>
        <end position="195"/>
    </location>
</feature>
<feature type="transmembrane region" description="Helical" evidence="1">
    <location>
        <begin position="207"/>
        <end position="227"/>
    </location>
</feature>
<feature type="transmembrane region" description="Helical" evidence="1">
    <location>
        <begin position="259"/>
        <end position="279"/>
    </location>
</feature>
<feature type="transmembrane region" description="Helical" evidence="3">
    <location>
        <begin position="288"/>
        <end position="308"/>
    </location>
</feature>
<feature type="transmembrane region" description="Helical" evidence="1">
    <location>
        <begin position="329"/>
        <end position="349"/>
    </location>
</feature>
<feature type="transmembrane region" description="Helical" evidence="1">
    <location>
        <begin position="372"/>
        <end position="392"/>
    </location>
</feature>
<feature type="transmembrane region" description="Helical" evidence="1">
    <location>
        <begin position="405"/>
        <end position="425"/>
    </location>
</feature>
<feature type="transmembrane region" description="Helical" evidence="1">
    <location>
        <begin position="432"/>
        <end position="452"/>
    </location>
</feature>
<feature type="helix" evidence="6">
    <location>
        <begin position="22"/>
        <end position="56"/>
    </location>
</feature>
<feature type="helix" evidence="6">
    <location>
        <begin position="60"/>
        <end position="76"/>
    </location>
</feature>
<feature type="helix" evidence="6">
    <location>
        <begin position="78"/>
        <end position="85"/>
    </location>
</feature>
<feature type="helix" evidence="6">
    <location>
        <begin position="88"/>
        <end position="97"/>
    </location>
</feature>
<feature type="helix" evidence="6">
    <location>
        <begin position="101"/>
        <end position="127"/>
    </location>
</feature>
<feature type="helix" evidence="6">
    <location>
        <begin position="129"/>
        <end position="136"/>
    </location>
</feature>
<feature type="helix" evidence="6">
    <location>
        <begin position="140"/>
        <end position="152"/>
    </location>
</feature>
<feature type="helix" evidence="6">
    <location>
        <begin position="154"/>
        <end position="172"/>
    </location>
</feature>
<feature type="helix" evidence="6">
    <location>
        <begin position="176"/>
        <end position="198"/>
    </location>
</feature>
<feature type="helix" evidence="6">
    <location>
        <begin position="206"/>
        <end position="229"/>
    </location>
</feature>
<feature type="helix" evidence="6">
    <location>
        <begin position="231"/>
        <end position="233"/>
    </location>
</feature>
<feature type="turn" evidence="6">
    <location>
        <begin position="234"/>
        <end position="236"/>
    </location>
</feature>
<feature type="helix" evidence="6">
    <location>
        <begin position="243"/>
        <end position="246"/>
    </location>
</feature>
<feature type="helix" evidence="6">
    <location>
        <begin position="248"/>
        <end position="275"/>
    </location>
</feature>
<feature type="helix" evidence="6">
    <location>
        <begin position="276"/>
        <end position="278"/>
    </location>
</feature>
<feature type="strand" evidence="6">
    <location>
        <begin position="279"/>
        <end position="281"/>
    </location>
</feature>
<feature type="helix" evidence="6">
    <location>
        <begin position="282"/>
        <end position="319"/>
    </location>
</feature>
<feature type="helix" evidence="6">
    <location>
        <begin position="323"/>
        <end position="350"/>
    </location>
</feature>
<feature type="helix" evidence="6">
    <location>
        <begin position="352"/>
        <end position="355"/>
    </location>
</feature>
<feature type="helix" evidence="6">
    <location>
        <begin position="356"/>
        <end position="358"/>
    </location>
</feature>
<feature type="helix" evidence="6">
    <location>
        <begin position="363"/>
        <end position="371"/>
    </location>
</feature>
<feature type="helix" evidence="6">
    <location>
        <begin position="373"/>
        <end position="395"/>
    </location>
</feature>
<feature type="helix" evidence="6">
    <location>
        <begin position="404"/>
        <end position="411"/>
    </location>
</feature>
<feature type="helix" evidence="6">
    <location>
        <begin position="414"/>
        <end position="422"/>
    </location>
</feature>
<feature type="turn" evidence="6">
    <location>
        <begin position="423"/>
        <end position="425"/>
    </location>
</feature>
<feature type="helix" evidence="6">
    <location>
        <begin position="428"/>
        <end position="452"/>
    </location>
</feature>
<feature type="helix" evidence="6">
    <location>
        <begin position="456"/>
        <end position="467"/>
    </location>
</feature>
<reference key="1">
    <citation type="journal article" date="2000" name="Nature">
        <title>Sequence and analysis of chromosome 1 of the plant Arabidopsis thaliana.</title>
        <authorList>
            <person name="Theologis A."/>
            <person name="Ecker J.R."/>
            <person name="Palm C.J."/>
            <person name="Federspiel N.A."/>
            <person name="Kaul S."/>
            <person name="White O."/>
            <person name="Alonso J."/>
            <person name="Altafi H."/>
            <person name="Araujo R."/>
            <person name="Bowman C.L."/>
            <person name="Brooks S.Y."/>
            <person name="Buehler E."/>
            <person name="Chan A."/>
            <person name="Chao Q."/>
            <person name="Chen H."/>
            <person name="Cheuk R.F."/>
            <person name="Chin C.W."/>
            <person name="Chung M.K."/>
            <person name="Conn L."/>
            <person name="Conway A.B."/>
            <person name="Conway A.R."/>
            <person name="Creasy T.H."/>
            <person name="Dewar K."/>
            <person name="Dunn P."/>
            <person name="Etgu P."/>
            <person name="Feldblyum T.V."/>
            <person name="Feng J.-D."/>
            <person name="Fong B."/>
            <person name="Fujii C.Y."/>
            <person name="Gill J.E."/>
            <person name="Goldsmith A.D."/>
            <person name="Haas B."/>
            <person name="Hansen N.F."/>
            <person name="Hughes B."/>
            <person name="Huizar L."/>
            <person name="Hunter J.L."/>
            <person name="Jenkins J."/>
            <person name="Johnson-Hopson C."/>
            <person name="Khan S."/>
            <person name="Khaykin E."/>
            <person name="Kim C.J."/>
            <person name="Koo H.L."/>
            <person name="Kremenetskaia I."/>
            <person name="Kurtz D.B."/>
            <person name="Kwan A."/>
            <person name="Lam B."/>
            <person name="Langin-Hooper S."/>
            <person name="Lee A."/>
            <person name="Lee J.M."/>
            <person name="Lenz C.A."/>
            <person name="Li J.H."/>
            <person name="Li Y.-P."/>
            <person name="Lin X."/>
            <person name="Liu S.X."/>
            <person name="Liu Z.A."/>
            <person name="Luros J.S."/>
            <person name="Maiti R."/>
            <person name="Marziali A."/>
            <person name="Militscher J."/>
            <person name="Miranda M."/>
            <person name="Nguyen M."/>
            <person name="Nierman W.C."/>
            <person name="Osborne B.I."/>
            <person name="Pai G."/>
            <person name="Peterson J."/>
            <person name="Pham P.K."/>
            <person name="Rizzo M."/>
            <person name="Rooney T."/>
            <person name="Rowley D."/>
            <person name="Sakano H."/>
            <person name="Salzberg S.L."/>
            <person name="Schwartz J.R."/>
            <person name="Shinn P."/>
            <person name="Southwick A.M."/>
            <person name="Sun H."/>
            <person name="Tallon L.J."/>
            <person name="Tambunga G."/>
            <person name="Toriumi M.J."/>
            <person name="Town C.D."/>
            <person name="Utterback T."/>
            <person name="Van Aken S."/>
            <person name="Vaysberg M."/>
            <person name="Vysotskaia V.S."/>
            <person name="Walker M."/>
            <person name="Wu D."/>
            <person name="Yu G."/>
            <person name="Fraser C.M."/>
            <person name="Venter J.C."/>
            <person name="Davis R.W."/>
        </authorList>
    </citation>
    <scope>NUCLEOTIDE SEQUENCE [LARGE SCALE GENOMIC DNA]</scope>
    <source>
        <strain>cv. Columbia</strain>
    </source>
</reference>
<reference key="2">
    <citation type="journal article" date="2017" name="Plant J.">
        <title>Araport11: a complete reannotation of the Arabidopsis thaliana reference genome.</title>
        <authorList>
            <person name="Cheng C.Y."/>
            <person name="Krishnakumar V."/>
            <person name="Chan A.P."/>
            <person name="Thibaud-Nissen F."/>
            <person name="Schobel S."/>
            <person name="Town C.D."/>
        </authorList>
    </citation>
    <scope>GENOME REANNOTATION</scope>
    <source>
        <strain>cv. Columbia</strain>
    </source>
</reference>
<reference key="3">
    <citation type="journal article" date="2002" name="J. Biol. Chem.">
        <title>Functional cloning and characterization of a plant efflux carrier for multidrug and heavy metal detoxification.</title>
        <authorList>
            <person name="Li L."/>
            <person name="He Z."/>
            <person name="Pandey G.K."/>
            <person name="Tsuchiya T."/>
            <person name="Luan S."/>
        </authorList>
    </citation>
    <scope>GENE FAMILY</scope>
    <scope>NOMENCLATURE</scope>
</reference>
<reference key="4">
    <citation type="journal article" date="2003" name="Eur. J. Biochem.">
        <title>The multidrug/oligosaccharidyl-lipid/polysaccharide (MOP) exporter superfamily.</title>
        <authorList>
            <person name="Hvorup R.N."/>
            <person name="Winnen B."/>
            <person name="Chang A.B."/>
            <person name="Jiang Y."/>
            <person name="Zhou X.F."/>
            <person name="Saier M.H. Jr."/>
        </authorList>
    </citation>
    <scope>GENE FAMILY</scope>
</reference>
<gene>
    <name evidence="2" type="primary">DTX14</name>
    <name evidence="4" type="ordered locus">At1g71140</name>
    <name evidence="5" type="ORF">F23N20.13</name>
</gene>
<keyword id="KW-0002">3D-structure</keyword>
<keyword id="KW-0472">Membrane</keyword>
<keyword id="KW-1185">Reference proteome</keyword>
<keyword id="KW-0812">Transmembrane</keyword>
<keyword id="KW-1133">Transmembrane helix</keyword>
<keyword id="KW-0813">Transport</keyword>
<evidence type="ECO:0000255" key="1"/>
<evidence type="ECO:0000303" key="2">
    <source>
    </source>
</evidence>
<evidence type="ECO:0000305" key="3"/>
<evidence type="ECO:0000312" key="4">
    <source>
        <dbReference type="Araport" id="AT1G71140"/>
    </source>
</evidence>
<evidence type="ECO:0000312" key="5">
    <source>
        <dbReference type="EMBL" id="AAG51691.1"/>
    </source>
</evidence>
<evidence type="ECO:0007829" key="6">
    <source>
        <dbReference type="PDB" id="5Y50"/>
    </source>
</evidence>